<sequence length="65" mass="7904">MVSVQMNENESIDKLLKRFKKKYERAGVLKEFRKKAYFVKPSIDNRLKRSRCKRRAQRANEERNS</sequence>
<organism>
    <name type="scientific">Chlorobaculum parvum (strain DSM 263 / NCIMB 8327)</name>
    <name type="common">Chlorobium vibrioforme subsp. thiosulfatophilum</name>
    <dbReference type="NCBI Taxonomy" id="517417"/>
    <lineage>
        <taxon>Bacteria</taxon>
        <taxon>Pseudomonadati</taxon>
        <taxon>Chlorobiota</taxon>
        <taxon>Chlorobiia</taxon>
        <taxon>Chlorobiales</taxon>
        <taxon>Chlorobiaceae</taxon>
        <taxon>Chlorobaculum</taxon>
    </lineage>
</organism>
<dbReference type="EMBL" id="CP001099">
    <property type="protein sequence ID" value="ACF10715.1"/>
    <property type="molecule type" value="Genomic_DNA"/>
</dbReference>
<dbReference type="RefSeq" id="WP_012501548.1">
    <property type="nucleotide sequence ID" value="NC_011027.1"/>
</dbReference>
<dbReference type="SMR" id="B3QQU5"/>
<dbReference type="STRING" id="517417.Cpar_0289"/>
<dbReference type="KEGG" id="cpc:Cpar_0289"/>
<dbReference type="eggNOG" id="COG0828">
    <property type="taxonomic scope" value="Bacteria"/>
</dbReference>
<dbReference type="HOGENOM" id="CLU_159258_2_1_10"/>
<dbReference type="OrthoDB" id="598353at2"/>
<dbReference type="Proteomes" id="UP000008811">
    <property type="component" value="Chromosome"/>
</dbReference>
<dbReference type="GO" id="GO:1990904">
    <property type="term" value="C:ribonucleoprotein complex"/>
    <property type="evidence" value="ECO:0007669"/>
    <property type="project" value="UniProtKB-KW"/>
</dbReference>
<dbReference type="GO" id="GO:0005840">
    <property type="term" value="C:ribosome"/>
    <property type="evidence" value="ECO:0007669"/>
    <property type="project" value="UniProtKB-KW"/>
</dbReference>
<dbReference type="GO" id="GO:0003735">
    <property type="term" value="F:structural constituent of ribosome"/>
    <property type="evidence" value="ECO:0007669"/>
    <property type="project" value="InterPro"/>
</dbReference>
<dbReference type="GO" id="GO:0006412">
    <property type="term" value="P:translation"/>
    <property type="evidence" value="ECO:0007669"/>
    <property type="project" value="UniProtKB-UniRule"/>
</dbReference>
<dbReference type="Gene3D" id="1.20.5.1150">
    <property type="entry name" value="Ribosomal protein S8"/>
    <property type="match status" value="1"/>
</dbReference>
<dbReference type="HAMAP" id="MF_00358">
    <property type="entry name" value="Ribosomal_bS21"/>
    <property type="match status" value="1"/>
</dbReference>
<dbReference type="InterPro" id="IPR001911">
    <property type="entry name" value="Ribosomal_bS21"/>
</dbReference>
<dbReference type="InterPro" id="IPR038380">
    <property type="entry name" value="Ribosomal_bS21_sf"/>
</dbReference>
<dbReference type="NCBIfam" id="TIGR00030">
    <property type="entry name" value="S21p"/>
    <property type="match status" value="1"/>
</dbReference>
<dbReference type="Pfam" id="PF01165">
    <property type="entry name" value="Ribosomal_S21"/>
    <property type="match status" value="1"/>
</dbReference>
<dbReference type="PRINTS" id="PR00976">
    <property type="entry name" value="RIBOSOMALS21"/>
</dbReference>
<comment type="similarity">
    <text evidence="1">Belongs to the bacterial ribosomal protein bS21 family.</text>
</comment>
<reference key="1">
    <citation type="submission" date="2008-06" db="EMBL/GenBank/DDBJ databases">
        <title>Complete sequence of Chlorobaculum parvum NCIB 8327.</title>
        <authorList>
            <consortium name="US DOE Joint Genome Institute"/>
            <person name="Lucas S."/>
            <person name="Copeland A."/>
            <person name="Lapidus A."/>
            <person name="Glavina del Rio T."/>
            <person name="Dalin E."/>
            <person name="Tice H."/>
            <person name="Bruce D."/>
            <person name="Goodwin L."/>
            <person name="Pitluck S."/>
            <person name="Schmutz J."/>
            <person name="Larimer F."/>
            <person name="Land M."/>
            <person name="Hauser L."/>
            <person name="Kyrpides N."/>
            <person name="Mikhailova N."/>
            <person name="Zhao F."/>
            <person name="Li T."/>
            <person name="Liu Z."/>
            <person name="Overmann J."/>
            <person name="Bryant D.A."/>
            <person name="Richardson P."/>
        </authorList>
    </citation>
    <scope>NUCLEOTIDE SEQUENCE [LARGE SCALE GENOMIC DNA]</scope>
    <source>
        <strain>DSM 263 / NCIMB 8327</strain>
    </source>
</reference>
<evidence type="ECO:0000255" key="1">
    <source>
        <dbReference type="HAMAP-Rule" id="MF_00358"/>
    </source>
</evidence>
<evidence type="ECO:0000305" key="2"/>
<gene>
    <name evidence="1" type="primary">rpsU</name>
    <name type="ordered locus">Cpar_0289</name>
</gene>
<accession>B3QQU5</accession>
<proteinExistence type="inferred from homology"/>
<feature type="chain" id="PRO_1000120597" description="Small ribosomal subunit protein bS21">
    <location>
        <begin position="1"/>
        <end position="65"/>
    </location>
</feature>
<name>RS21_CHLP8</name>
<keyword id="KW-0687">Ribonucleoprotein</keyword>
<keyword id="KW-0689">Ribosomal protein</keyword>
<protein>
    <recommendedName>
        <fullName evidence="1">Small ribosomal subunit protein bS21</fullName>
    </recommendedName>
    <alternativeName>
        <fullName evidence="2">30S ribosomal protein S21</fullName>
    </alternativeName>
</protein>